<comment type="subcellular location">
    <subcellularLocation>
        <location evidence="1">Plastid</location>
        <location evidence="1">Chloroplast thylakoid membrane</location>
        <topology evidence="1">Multi-pass membrane protein</topology>
    </subcellularLocation>
</comment>
<comment type="similarity">
    <text evidence="1">Belongs to the PsaL family.</text>
</comment>
<comment type="sequence caution" evidence="2">
    <conflict type="erroneous initiation">
        <sequence resource="EMBL-CDS" id="AAW79347"/>
    </conflict>
    <text>Extended N-terminus.</text>
</comment>
<geneLocation type="chloroplast"/>
<feature type="chain" id="PRO_0000194691" description="Photosystem I reaction center subunit XI">
    <location>
        <begin position="1"/>
        <end position="145"/>
    </location>
</feature>
<feature type="transmembrane region" description="Helical" evidence="1">
    <location>
        <begin position="48"/>
        <end position="68"/>
    </location>
</feature>
<feature type="transmembrane region" description="Helical" evidence="1">
    <location>
        <begin position="75"/>
        <end position="95"/>
    </location>
</feature>
<feature type="transmembrane region" description="Helical" evidence="1">
    <location>
        <begin position="125"/>
        <end position="145"/>
    </location>
</feature>
<accession>Q5ENP6</accession>
<dbReference type="EMBL" id="AY826886">
    <property type="protein sequence ID" value="AAW79347.1"/>
    <property type="status" value="ALT_INIT"/>
    <property type="molecule type" value="mRNA"/>
</dbReference>
<dbReference type="SMR" id="Q5ENP6"/>
<dbReference type="GO" id="GO:0009535">
    <property type="term" value="C:chloroplast thylakoid membrane"/>
    <property type="evidence" value="ECO:0007669"/>
    <property type="project" value="UniProtKB-SubCell"/>
</dbReference>
<dbReference type="GO" id="GO:0009538">
    <property type="term" value="C:photosystem I reaction center"/>
    <property type="evidence" value="ECO:0007669"/>
    <property type="project" value="InterPro"/>
</dbReference>
<dbReference type="GO" id="GO:0015979">
    <property type="term" value="P:photosynthesis"/>
    <property type="evidence" value="ECO:0007669"/>
    <property type="project" value="UniProtKB-UniRule"/>
</dbReference>
<dbReference type="Gene3D" id="1.20.1240.10">
    <property type="entry name" value="Photosystem I PsaL, reaction centre subunit XI"/>
    <property type="match status" value="1"/>
</dbReference>
<dbReference type="HAMAP" id="MF_00447">
    <property type="entry name" value="PSI_PsaL"/>
    <property type="match status" value="1"/>
</dbReference>
<dbReference type="InterPro" id="IPR003757">
    <property type="entry name" value="PSI_PsaL"/>
</dbReference>
<dbReference type="InterPro" id="IPR036592">
    <property type="entry name" value="PSI_PsaL_sf"/>
</dbReference>
<dbReference type="InterPro" id="IPR022980">
    <property type="entry name" value="PSI_suXI"/>
</dbReference>
<dbReference type="PANTHER" id="PTHR34803">
    <property type="entry name" value="PHOTOSYSTEM I REACTION CENTER SUBUNIT XI, CHLOROPLASTIC"/>
    <property type="match status" value="1"/>
</dbReference>
<dbReference type="PANTHER" id="PTHR34803:SF2">
    <property type="entry name" value="PHOTOSYSTEM I REACTION CENTER SUBUNIT XI, CHLOROPLASTIC"/>
    <property type="match status" value="1"/>
</dbReference>
<dbReference type="Pfam" id="PF02605">
    <property type="entry name" value="PsaL"/>
    <property type="match status" value="1"/>
</dbReference>
<dbReference type="SUPFAM" id="SSF81568">
    <property type="entry name" value="Photosystem I reaction center subunit XI, PsaL"/>
    <property type="match status" value="1"/>
</dbReference>
<sequence>MSEFVKPFNNDPFVGNLSTPVTTSTATKLYLGNLPIYRKGLTPLLRGLEIGMAHGYFLIGPFYILGPLRNSPNALLVGLFSAFGLIIILTLALTIYGLASFQDNGVGENLESSKGWRNFTSGFTIGALGGASVAYLVLNNISFFA</sequence>
<organism>
    <name type="scientific">Isochrysis galbana</name>
    <name type="common">Marine planktonic alga</name>
    <dbReference type="NCBI Taxonomy" id="37099"/>
    <lineage>
        <taxon>Eukaryota</taxon>
        <taxon>Haptista</taxon>
        <taxon>Haptophyta</taxon>
        <taxon>Prymnesiophyceae</taxon>
        <taxon>Isochrysidales</taxon>
        <taxon>Isochrysidaceae</taxon>
        <taxon>Isochrysis</taxon>
    </lineage>
</organism>
<gene>
    <name evidence="1" type="primary">psaL</name>
</gene>
<reference key="1">
    <citation type="journal article" date="2005" name="J. Mol. Biol.">
        <title>Complex protein targeting to dinoflagellate plastids.</title>
        <authorList>
            <person name="Patron N.J."/>
            <person name="Waller R.F."/>
            <person name="Archibald J.M."/>
            <person name="Keeling P.J."/>
        </authorList>
    </citation>
    <scope>NUCLEOTIDE SEQUENCE [MRNA]</scope>
</reference>
<evidence type="ECO:0000255" key="1">
    <source>
        <dbReference type="HAMAP-Rule" id="MF_00447"/>
    </source>
</evidence>
<evidence type="ECO:0000305" key="2"/>
<keyword id="KW-0150">Chloroplast</keyword>
<keyword id="KW-0472">Membrane</keyword>
<keyword id="KW-0602">Photosynthesis</keyword>
<keyword id="KW-0603">Photosystem I</keyword>
<keyword id="KW-0934">Plastid</keyword>
<keyword id="KW-0793">Thylakoid</keyword>
<keyword id="KW-0812">Transmembrane</keyword>
<keyword id="KW-1133">Transmembrane helix</keyword>
<protein>
    <recommendedName>
        <fullName evidence="1">Photosystem I reaction center subunit XI</fullName>
    </recommendedName>
    <alternativeName>
        <fullName evidence="1">PSI subunit V</fullName>
    </alternativeName>
    <alternativeName>
        <fullName evidence="1">PSI-L</fullName>
    </alternativeName>
</protein>
<proteinExistence type="evidence at transcript level"/>
<name>PSAL_ISOGA</name>